<dbReference type="EMBL" id="CP000025">
    <property type="protein sequence ID" value="AAW34573.1"/>
    <property type="molecule type" value="Genomic_DNA"/>
</dbReference>
<dbReference type="RefSeq" id="WP_002864738.1">
    <property type="nucleotide sequence ID" value="NC_003912.7"/>
</dbReference>
<dbReference type="SMR" id="Q5HV94"/>
<dbReference type="KEGG" id="cjr:CJE0786"/>
<dbReference type="HOGENOM" id="CLU_069313_1_1_7"/>
<dbReference type="GO" id="GO:0009427">
    <property type="term" value="C:bacterial-type flagellum basal body, distal rod, L ring"/>
    <property type="evidence" value="ECO:0007669"/>
    <property type="project" value="InterPro"/>
</dbReference>
<dbReference type="GO" id="GO:0009279">
    <property type="term" value="C:cell outer membrane"/>
    <property type="evidence" value="ECO:0007669"/>
    <property type="project" value="UniProtKB-SubCell"/>
</dbReference>
<dbReference type="GO" id="GO:0003774">
    <property type="term" value="F:cytoskeletal motor activity"/>
    <property type="evidence" value="ECO:0007669"/>
    <property type="project" value="InterPro"/>
</dbReference>
<dbReference type="GO" id="GO:0071973">
    <property type="term" value="P:bacterial-type flagellum-dependent cell motility"/>
    <property type="evidence" value="ECO:0007669"/>
    <property type="project" value="InterPro"/>
</dbReference>
<dbReference type="HAMAP" id="MF_00415">
    <property type="entry name" value="FlgH"/>
    <property type="match status" value="1"/>
</dbReference>
<dbReference type="InterPro" id="IPR000527">
    <property type="entry name" value="Flag_Lring"/>
</dbReference>
<dbReference type="NCBIfam" id="NF001303">
    <property type="entry name" value="PRK00249.1-3"/>
    <property type="match status" value="1"/>
</dbReference>
<dbReference type="PANTHER" id="PTHR34933">
    <property type="entry name" value="FLAGELLAR L-RING PROTEIN"/>
    <property type="match status" value="1"/>
</dbReference>
<dbReference type="PANTHER" id="PTHR34933:SF1">
    <property type="entry name" value="FLAGELLAR L-RING PROTEIN"/>
    <property type="match status" value="1"/>
</dbReference>
<dbReference type="Pfam" id="PF02107">
    <property type="entry name" value="FlgH"/>
    <property type="match status" value="1"/>
</dbReference>
<dbReference type="PRINTS" id="PR01008">
    <property type="entry name" value="FLGLRINGFLGH"/>
</dbReference>
<dbReference type="PROSITE" id="PS51257">
    <property type="entry name" value="PROKAR_LIPOPROTEIN"/>
    <property type="match status" value="1"/>
</dbReference>
<accession>Q5HV94</accession>
<feature type="signal peptide" evidence="1">
    <location>
        <begin position="1"/>
        <end position="15"/>
    </location>
</feature>
<feature type="chain" id="PRO_0000009437" description="Flagellar L-ring protein">
    <location>
        <begin position="16"/>
        <end position="232"/>
    </location>
</feature>
<feature type="lipid moiety-binding region" description="N-palmitoyl cysteine" evidence="1">
    <location>
        <position position="16"/>
    </location>
</feature>
<feature type="lipid moiety-binding region" description="S-diacylglycerol cysteine" evidence="1">
    <location>
        <position position="16"/>
    </location>
</feature>
<protein>
    <recommendedName>
        <fullName evidence="1">Flagellar L-ring protein</fullName>
    </recommendedName>
    <alternativeName>
        <fullName evidence="1">Basal body L-ring protein</fullName>
    </alternativeName>
</protein>
<keyword id="KW-0975">Bacterial flagellum</keyword>
<keyword id="KW-0998">Cell outer membrane</keyword>
<keyword id="KW-0449">Lipoprotein</keyword>
<keyword id="KW-0472">Membrane</keyword>
<keyword id="KW-0564">Palmitate</keyword>
<keyword id="KW-0732">Signal</keyword>
<gene>
    <name evidence="1" type="primary">flgH</name>
    <name type="ordered locus">CJE0786</name>
</gene>
<name>FLGH_CAMJR</name>
<sequence length="232" mass="25154">MKKVLFYVLPFAFFGCSATVDPQISMKPPAYVEELAPKQSNNVESAPGSLFGKGDNPLFSDKKAMNVNDLVTVVIQESTTQSTQANKATSRTNTSNLGGGALTGSSGVVANALNKVNAYSNIGFQTNSSNNYTGTGSQSRNESFNTTISTRVIKILSNGNYFIEGSRELLINGEKQIIQLSGVIRPYDIGQDNTIDSKYIADAKILYKTEGEVDRSTRKPWGSKVIEAIWPF</sequence>
<comment type="function">
    <text evidence="1">Assembles around the rod to form the L-ring and probably protects the motor/basal body from shearing forces during rotation.</text>
</comment>
<comment type="subunit">
    <text evidence="1">The basal body constitutes a major portion of the flagellar organelle and consists of four rings (L,P,S, and M) mounted on a central rod.</text>
</comment>
<comment type="subcellular location">
    <subcellularLocation>
        <location evidence="1">Cell outer membrane</location>
        <topology evidence="1">Lipid-anchor</topology>
    </subcellularLocation>
    <subcellularLocation>
        <location evidence="1">Bacterial flagellum basal body</location>
    </subcellularLocation>
</comment>
<comment type="similarity">
    <text evidence="1">Belongs to the FlgH family.</text>
</comment>
<proteinExistence type="inferred from homology"/>
<reference key="1">
    <citation type="journal article" date="2005" name="PLoS Biol.">
        <title>Major structural differences and novel potential virulence mechanisms from the genomes of multiple Campylobacter species.</title>
        <authorList>
            <person name="Fouts D.E."/>
            <person name="Mongodin E.F."/>
            <person name="Mandrell R.E."/>
            <person name="Miller W.G."/>
            <person name="Rasko D.A."/>
            <person name="Ravel J."/>
            <person name="Brinkac L.M."/>
            <person name="DeBoy R.T."/>
            <person name="Parker C.T."/>
            <person name="Daugherty S.C."/>
            <person name="Dodson R.J."/>
            <person name="Durkin A.S."/>
            <person name="Madupu R."/>
            <person name="Sullivan S.A."/>
            <person name="Shetty J.U."/>
            <person name="Ayodeji M.A."/>
            <person name="Shvartsbeyn A."/>
            <person name="Schatz M.C."/>
            <person name="Badger J.H."/>
            <person name="Fraser C.M."/>
            <person name="Nelson K.E."/>
        </authorList>
    </citation>
    <scope>NUCLEOTIDE SEQUENCE [LARGE SCALE GENOMIC DNA]</scope>
    <source>
        <strain>RM1221</strain>
    </source>
</reference>
<organism>
    <name type="scientific">Campylobacter jejuni (strain RM1221)</name>
    <dbReference type="NCBI Taxonomy" id="195099"/>
    <lineage>
        <taxon>Bacteria</taxon>
        <taxon>Pseudomonadati</taxon>
        <taxon>Campylobacterota</taxon>
        <taxon>Epsilonproteobacteria</taxon>
        <taxon>Campylobacterales</taxon>
        <taxon>Campylobacteraceae</taxon>
        <taxon>Campylobacter</taxon>
    </lineage>
</organism>
<evidence type="ECO:0000255" key="1">
    <source>
        <dbReference type="HAMAP-Rule" id="MF_00415"/>
    </source>
</evidence>